<dbReference type="EMBL" id="BA000022">
    <property type="protein sequence ID" value="BAA18704.1"/>
    <property type="molecule type" value="Genomic_DNA"/>
</dbReference>
<dbReference type="PIR" id="S76792">
    <property type="entry name" value="S76792"/>
</dbReference>
<dbReference type="SMR" id="P74596"/>
<dbReference type="IntAct" id="P74596">
    <property type="interactions" value="5"/>
</dbReference>
<dbReference type="STRING" id="1148.gene:10500476"/>
<dbReference type="PaxDb" id="1148-1653793"/>
<dbReference type="EnsemblBacteria" id="BAA18704">
    <property type="protein sequence ID" value="BAA18704"/>
    <property type="gene ID" value="BAA18704"/>
</dbReference>
<dbReference type="KEGG" id="syn:slr1565"/>
<dbReference type="eggNOG" id="COG0316">
    <property type="taxonomic scope" value="Bacteria"/>
</dbReference>
<dbReference type="InParanoid" id="P74596"/>
<dbReference type="PhylomeDB" id="P74596"/>
<dbReference type="Proteomes" id="UP000001425">
    <property type="component" value="Chromosome"/>
</dbReference>
<dbReference type="GO" id="GO:0005737">
    <property type="term" value="C:cytoplasm"/>
    <property type="evidence" value="ECO:0000318"/>
    <property type="project" value="GO_Central"/>
</dbReference>
<dbReference type="GO" id="GO:0051537">
    <property type="term" value="F:2 iron, 2 sulfur cluster binding"/>
    <property type="evidence" value="ECO:0000314"/>
    <property type="project" value="UniProtKB"/>
</dbReference>
<dbReference type="GO" id="GO:0016226">
    <property type="term" value="P:iron-sulfur cluster assembly"/>
    <property type="evidence" value="ECO:0000314"/>
    <property type="project" value="UniProtKB"/>
</dbReference>
<dbReference type="Gene3D" id="2.60.300.12">
    <property type="entry name" value="HesB-like domain"/>
    <property type="match status" value="1"/>
</dbReference>
<dbReference type="InterPro" id="IPR000361">
    <property type="entry name" value="FeS_biogenesis"/>
</dbReference>
<dbReference type="InterPro" id="IPR016092">
    <property type="entry name" value="FeS_cluster_insertion"/>
</dbReference>
<dbReference type="InterPro" id="IPR017870">
    <property type="entry name" value="FeS_cluster_insertion_CS"/>
</dbReference>
<dbReference type="InterPro" id="IPR035903">
    <property type="entry name" value="HesB-like_dom_sf"/>
</dbReference>
<dbReference type="NCBIfam" id="TIGR00049">
    <property type="entry name" value="iron-sulfur cluster assembly accessory protein"/>
    <property type="match status" value="1"/>
</dbReference>
<dbReference type="PANTHER" id="PTHR43011">
    <property type="entry name" value="IRON-SULFUR CLUSTER ASSEMBLY 2 HOMOLOG, MITOCHONDRIAL"/>
    <property type="match status" value="1"/>
</dbReference>
<dbReference type="PANTHER" id="PTHR43011:SF1">
    <property type="entry name" value="IRON-SULFUR CLUSTER ASSEMBLY 2 HOMOLOG, MITOCHONDRIAL"/>
    <property type="match status" value="1"/>
</dbReference>
<dbReference type="Pfam" id="PF01521">
    <property type="entry name" value="Fe-S_biosyn"/>
    <property type="match status" value="1"/>
</dbReference>
<dbReference type="SUPFAM" id="SSF89360">
    <property type="entry name" value="HesB-like domain"/>
    <property type="match status" value="1"/>
</dbReference>
<dbReference type="PROSITE" id="PS01152">
    <property type="entry name" value="HESB"/>
    <property type="match status" value="1"/>
</dbReference>
<accession>P74596</accession>
<protein>
    <recommendedName>
        <fullName>Uncharacterized protein slr1565</fullName>
    </recommendedName>
</protein>
<reference key="1">
    <citation type="journal article" date="1996" name="DNA Res.">
        <title>Sequence analysis of the genome of the unicellular cyanobacterium Synechocystis sp. strain PCC6803. II. Sequence determination of the entire genome and assignment of potential protein-coding regions.</title>
        <authorList>
            <person name="Kaneko T."/>
            <person name="Sato S."/>
            <person name="Kotani H."/>
            <person name="Tanaka A."/>
            <person name="Asamizu E."/>
            <person name="Nakamura Y."/>
            <person name="Miyajima N."/>
            <person name="Hirosawa M."/>
            <person name="Sugiura M."/>
            <person name="Sasamoto S."/>
            <person name="Kimura T."/>
            <person name="Hosouchi T."/>
            <person name="Matsuno A."/>
            <person name="Muraki A."/>
            <person name="Nakazaki N."/>
            <person name="Naruo K."/>
            <person name="Okumura S."/>
            <person name="Shimpo S."/>
            <person name="Takeuchi C."/>
            <person name="Wada T."/>
            <person name="Watanabe A."/>
            <person name="Yamada M."/>
            <person name="Yasuda M."/>
            <person name="Tabata S."/>
        </authorList>
    </citation>
    <scope>NUCLEOTIDE SEQUENCE [LARGE SCALE GENOMIC DNA]</scope>
    <source>
        <strain>ATCC 27184 / PCC 6803 / Kazusa</strain>
    </source>
</reference>
<feature type="chain" id="PRO_0000077023" description="Uncharacterized protein slr1565">
    <location>
        <begin position="1"/>
        <end position="113"/>
    </location>
</feature>
<organism>
    <name type="scientific">Synechocystis sp. (strain ATCC 27184 / PCC 6803 / Kazusa)</name>
    <dbReference type="NCBI Taxonomy" id="1111708"/>
    <lineage>
        <taxon>Bacteria</taxon>
        <taxon>Bacillati</taxon>
        <taxon>Cyanobacteriota</taxon>
        <taxon>Cyanophyceae</taxon>
        <taxon>Synechococcales</taxon>
        <taxon>Merismopediaceae</taxon>
        <taxon>Synechocystis</taxon>
    </lineage>
</organism>
<keyword id="KW-1185">Reference proteome</keyword>
<proteinExistence type="evidence at protein level"/>
<name>Y1565_SYNY3</name>
<sequence length="113" mass="12520">MLQLTPSAAQEIKRLQHSRQLTRHHFRLAVRPGGCAGWLYHLDFVPEITADDLEYESGGVTVLVDSQSAGYLHNLKLDYAEDLMGGGFRFTNPNAAQVCSCSLSFAPNLEKNL</sequence>
<evidence type="ECO:0000305" key="1"/>
<comment type="interaction">
    <interactant intactId="EBI-765258">
        <id>P74596</id>
    </interactant>
    <interactant intactId="EBI-765249">
        <id>P72742</id>
        <label>slr1098</label>
    </interactant>
    <organismsDiffer>false</organismsDiffer>
    <experiments>6</experiments>
</comment>
<comment type="similarity">
    <text evidence="1">Belongs to the HesB/IscA family.</text>
</comment>
<gene>
    <name type="ordered locus">slr1565</name>
</gene>